<feature type="chain" id="PRO_1000090300" description="Holliday junction branch migration complex subunit RuvA">
    <location>
        <begin position="1"/>
        <end position="200"/>
    </location>
</feature>
<feature type="region of interest" description="Domain I" evidence="1">
    <location>
        <begin position="1"/>
        <end position="64"/>
    </location>
</feature>
<feature type="region of interest" description="Domain II" evidence="1">
    <location>
        <begin position="65"/>
        <end position="143"/>
    </location>
</feature>
<feature type="region of interest" description="Flexible linker" evidence="1">
    <location>
        <begin position="144"/>
        <end position="148"/>
    </location>
</feature>
<feature type="region of interest" description="Domain III" evidence="1">
    <location>
        <begin position="149"/>
        <end position="200"/>
    </location>
</feature>
<comment type="function">
    <text evidence="1">The RuvA-RuvB-RuvC complex processes Holliday junction (HJ) DNA during genetic recombination and DNA repair, while the RuvA-RuvB complex plays an important role in the rescue of blocked DNA replication forks via replication fork reversal (RFR). RuvA specifically binds to HJ cruciform DNA, conferring on it an open structure. The RuvB hexamer acts as an ATP-dependent pump, pulling dsDNA into and through the RuvAB complex. HJ branch migration allows RuvC to scan DNA until it finds its consensus sequence, where it cleaves and resolves the cruciform DNA.</text>
</comment>
<comment type="subunit">
    <text evidence="1">Homotetramer. Forms an RuvA(8)-RuvB(12)-Holliday junction (HJ) complex. HJ DNA is sandwiched between 2 RuvA tetramers; dsDNA enters through RuvA and exits via RuvB. An RuvB hexamer assembles on each DNA strand where it exits the tetramer. Each RuvB hexamer is contacted by two RuvA subunits (via domain III) on 2 adjacent RuvB subunits; this complex drives branch migration. In the full resolvosome a probable DNA-RuvA(4)-RuvB(12)-RuvC(2) complex forms which resolves the HJ.</text>
</comment>
<comment type="subcellular location">
    <subcellularLocation>
        <location evidence="1">Cytoplasm</location>
    </subcellularLocation>
</comment>
<comment type="domain">
    <text evidence="1">Has three domains with a flexible linker between the domains II and III and assumes an 'L' shape. Domain III is highly mobile and contacts RuvB.</text>
</comment>
<comment type="similarity">
    <text evidence="1">Belongs to the RuvA family.</text>
</comment>
<proteinExistence type="inferred from homology"/>
<organism>
    <name type="scientific">Chloroherpeton thalassium (strain ATCC 35110 / GB-78)</name>
    <dbReference type="NCBI Taxonomy" id="517418"/>
    <lineage>
        <taxon>Bacteria</taxon>
        <taxon>Pseudomonadati</taxon>
        <taxon>Chlorobiota</taxon>
        <taxon>Chlorobiia</taxon>
        <taxon>Chlorobiales</taxon>
        <taxon>Chloroherpetonaceae</taxon>
        <taxon>Chloroherpeton</taxon>
    </lineage>
</organism>
<evidence type="ECO:0000255" key="1">
    <source>
        <dbReference type="HAMAP-Rule" id="MF_00031"/>
    </source>
</evidence>
<gene>
    <name evidence="1" type="primary">ruvA</name>
    <name type="ordered locus">Ctha_0592</name>
</gene>
<keyword id="KW-0963">Cytoplasm</keyword>
<keyword id="KW-0227">DNA damage</keyword>
<keyword id="KW-0233">DNA recombination</keyword>
<keyword id="KW-0234">DNA repair</keyword>
<keyword id="KW-0238">DNA-binding</keyword>
<keyword id="KW-1185">Reference proteome</keyword>
<accession>B3QVA9</accession>
<reference key="1">
    <citation type="submission" date="2008-06" db="EMBL/GenBank/DDBJ databases">
        <title>Complete sequence of Chloroherpeton thalassium ATCC 35110.</title>
        <authorList>
            <consortium name="US DOE Joint Genome Institute"/>
            <person name="Lucas S."/>
            <person name="Copeland A."/>
            <person name="Lapidus A."/>
            <person name="Glavina del Rio T."/>
            <person name="Dalin E."/>
            <person name="Tice H."/>
            <person name="Bruce D."/>
            <person name="Goodwin L."/>
            <person name="Pitluck S."/>
            <person name="Schmutz J."/>
            <person name="Larimer F."/>
            <person name="Land M."/>
            <person name="Hauser L."/>
            <person name="Kyrpides N."/>
            <person name="Mikhailova N."/>
            <person name="Liu Z."/>
            <person name="Li T."/>
            <person name="Zhao F."/>
            <person name="Overmann J."/>
            <person name="Bryant D.A."/>
            <person name="Richardson P."/>
        </authorList>
    </citation>
    <scope>NUCLEOTIDE SEQUENCE [LARGE SCALE GENOMIC DNA]</scope>
    <source>
        <strain>ATCC 35110 / GB-78</strain>
    </source>
</reference>
<dbReference type="EMBL" id="CP001100">
    <property type="protein sequence ID" value="ACF13063.1"/>
    <property type="molecule type" value="Genomic_DNA"/>
</dbReference>
<dbReference type="RefSeq" id="WP_012499147.1">
    <property type="nucleotide sequence ID" value="NC_011026.1"/>
</dbReference>
<dbReference type="SMR" id="B3QVA9"/>
<dbReference type="STRING" id="517418.Ctha_0592"/>
<dbReference type="KEGG" id="cts:Ctha_0592"/>
<dbReference type="eggNOG" id="COG0632">
    <property type="taxonomic scope" value="Bacteria"/>
</dbReference>
<dbReference type="HOGENOM" id="CLU_087936_3_0_10"/>
<dbReference type="OrthoDB" id="5293449at2"/>
<dbReference type="Proteomes" id="UP000001208">
    <property type="component" value="Chromosome"/>
</dbReference>
<dbReference type="GO" id="GO:0005737">
    <property type="term" value="C:cytoplasm"/>
    <property type="evidence" value="ECO:0007669"/>
    <property type="project" value="UniProtKB-SubCell"/>
</dbReference>
<dbReference type="GO" id="GO:0009379">
    <property type="term" value="C:Holliday junction helicase complex"/>
    <property type="evidence" value="ECO:0007669"/>
    <property type="project" value="InterPro"/>
</dbReference>
<dbReference type="GO" id="GO:0048476">
    <property type="term" value="C:Holliday junction resolvase complex"/>
    <property type="evidence" value="ECO:0007669"/>
    <property type="project" value="UniProtKB-UniRule"/>
</dbReference>
<dbReference type="GO" id="GO:0005524">
    <property type="term" value="F:ATP binding"/>
    <property type="evidence" value="ECO:0007669"/>
    <property type="project" value="InterPro"/>
</dbReference>
<dbReference type="GO" id="GO:0000400">
    <property type="term" value="F:four-way junction DNA binding"/>
    <property type="evidence" value="ECO:0007669"/>
    <property type="project" value="UniProtKB-UniRule"/>
</dbReference>
<dbReference type="GO" id="GO:0009378">
    <property type="term" value="F:four-way junction helicase activity"/>
    <property type="evidence" value="ECO:0007669"/>
    <property type="project" value="InterPro"/>
</dbReference>
<dbReference type="GO" id="GO:0006310">
    <property type="term" value="P:DNA recombination"/>
    <property type="evidence" value="ECO:0007669"/>
    <property type="project" value="UniProtKB-UniRule"/>
</dbReference>
<dbReference type="GO" id="GO:0006281">
    <property type="term" value="P:DNA repair"/>
    <property type="evidence" value="ECO:0007669"/>
    <property type="project" value="UniProtKB-UniRule"/>
</dbReference>
<dbReference type="CDD" id="cd14332">
    <property type="entry name" value="UBA_RuvA_C"/>
    <property type="match status" value="1"/>
</dbReference>
<dbReference type="Gene3D" id="1.10.150.20">
    <property type="entry name" value="5' to 3' exonuclease, C-terminal subdomain"/>
    <property type="match status" value="1"/>
</dbReference>
<dbReference type="Gene3D" id="1.10.8.10">
    <property type="entry name" value="DNA helicase RuvA subunit, C-terminal domain"/>
    <property type="match status" value="1"/>
</dbReference>
<dbReference type="Gene3D" id="2.40.50.140">
    <property type="entry name" value="Nucleic acid-binding proteins"/>
    <property type="match status" value="1"/>
</dbReference>
<dbReference type="HAMAP" id="MF_00031">
    <property type="entry name" value="DNA_HJ_migration_RuvA"/>
    <property type="match status" value="1"/>
</dbReference>
<dbReference type="InterPro" id="IPR013849">
    <property type="entry name" value="DNA_helicase_Holl-junc_RuvA_I"/>
</dbReference>
<dbReference type="InterPro" id="IPR003583">
    <property type="entry name" value="Hlx-hairpin-Hlx_DNA-bd_motif"/>
</dbReference>
<dbReference type="InterPro" id="IPR012340">
    <property type="entry name" value="NA-bd_OB-fold"/>
</dbReference>
<dbReference type="InterPro" id="IPR000085">
    <property type="entry name" value="RuvA"/>
</dbReference>
<dbReference type="InterPro" id="IPR010994">
    <property type="entry name" value="RuvA_2-like"/>
</dbReference>
<dbReference type="InterPro" id="IPR011114">
    <property type="entry name" value="RuvA_C"/>
</dbReference>
<dbReference type="InterPro" id="IPR036267">
    <property type="entry name" value="RuvA_C_sf"/>
</dbReference>
<dbReference type="NCBIfam" id="TIGR00084">
    <property type="entry name" value="ruvA"/>
    <property type="match status" value="1"/>
</dbReference>
<dbReference type="Pfam" id="PF14520">
    <property type="entry name" value="HHH_5"/>
    <property type="match status" value="1"/>
</dbReference>
<dbReference type="Pfam" id="PF07499">
    <property type="entry name" value="RuvA_C"/>
    <property type="match status" value="1"/>
</dbReference>
<dbReference type="Pfam" id="PF01330">
    <property type="entry name" value="RuvA_N"/>
    <property type="match status" value="1"/>
</dbReference>
<dbReference type="SMART" id="SM00278">
    <property type="entry name" value="HhH1"/>
    <property type="match status" value="2"/>
</dbReference>
<dbReference type="SUPFAM" id="SSF46929">
    <property type="entry name" value="DNA helicase RuvA subunit, C-terminal domain"/>
    <property type="match status" value="1"/>
</dbReference>
<dbReference type="SUPFAM" id="SSF50249">
    <property type="entry name" value="Nucleic acid-binding proteins"/>
    <property type="match status" value="1"/>
</dbReference>
<dbReference type="SUPFAM" id="SSF47781">
    <property type="entry name" value="RuvA domain 2-like"/>
    <property type="match status" value="1"/>
</dbReference>
<name>RUVA_CHLT3</name>
<protein>
    <recommendedName>
        <fullName evidence="1">Holliday junction branch migration complex subunit RuvA</fullName>
    </recommendedName>
</protein>
<sequence length="200" mass="21823">MLSYLSGTLIEKFSTEIVVEVNGVGYLLNISATTHEKLPAIGNQIKILTYLYVREDALQLYGFITTEDREVFKLLIAISGVGPKLAQTILSGMSTAQLRESVIAGDTKALTAIAGVGKKTAERIILELKDKLVKLDLKIDIKETAFRSDKQQVRNDAYSALISLGFTKSIAEKAMRAAIAEVPDGSVDDLIRVALRHVQS</sequence>